<accession>P85806</accession>
<dbReference type="InParanoid" id="P85806"/>
<dbReference type="Proteomes" id="UP000015103">
    <property type="component" value="Unassembled WGS sequence"/>
</dbReference>
<dbReference type="GO" id="GO:0005576">
    <property type="term" value="C:extracellular region"/>
    <property type="evidence" value="ECO:0007669"/>
    <property type="project" value="UniProtKB-SubCell"/>
</dbReference>
<dbReference type="GO" id="GO:0007218">
    <property type="term" value="P:neuropeptide signaling pathway"/>
    <property type="evidence" value="ECO:0007669"/>
    <property type="project" value="UniProtKB-KW"/>
</dbReference>
<proteinExistence type="evidence at protein level"/>
<protein>
    <recommendedName>
        <fullName evidence="2">Tachykinin-related peptide 5</fullName>
        <shortName evidence="2">Rhopr-TRP-5</shortName>
    </recommendedName>
</protein>
<sequence length="11" mass="1136">APACVGFQGMR</sequence>
<comment type="function">
    <text evidence="3">Myoactive peptide. Increases the amplitude and frequency of spontaneous contractions and tonus of hindgut muscle.</text>
</comment>
<comment type="subcellular location">
    <subcellularLocation>
        <location evidence="3">Secreted</location>
    </subcellularLocation>
</comment>
<comment type="mass spectrometry" mass="1135.51" method="MALDI" evidence="1"/>
<reference evidence="3" key="1">
    <citation type="journal article" date="2009" name="Proteomics">
        <title>The neuropeptidome of Rhodnius prolixus brain.</title>
        <authorList>
            <person name="Ons S."/>
            <person name="Richter F."/>
            <person name="Urlaub H."/>
            <person name="Pomar R.R."/>
        </authorList>
    </citation>
    <scope>PROTEIN SEQUENCE</scope>
    <scope>MASS SPECTROMETRY</scope>
    <scope>AMIDATION AT ARG-11</scope>
    <source>
        <tissue evidence="1">Brain</tissue>
    </source>
</reference>
<organism>
    <name type="scientific">Rhodnius prolixus</name>
    <name type="common">Triatomid bug</name>
    <dbReference type="NCBI Taxonomy" id="13249"/>
    <lineage>
        <taxon>Eukaryota</taxon>
        <taxon>Metazoa</taxon>
        <taxon>Ecdysozoa</taxon>
        <taxon>Arthropoda</taxon>
        <taxon>Hexapoda</taxon>
        <taxon>Insecta</taxon>
        <taxon>Pterygota</taxon>
        <taxon>Neoptera</taxon>
        <taxon>Paraneoptera</taxon>
        <taxon>Hemiptera</taxon>
        <taxon>Heteroptera</taxon>
        <taxon>Panheteroptera</taxon>
        <taxon>Cimicomorpha</taxon>
        <taxon>Reduviidae</taxon>
        <taxon>Triatominae</taxon>
        <taxon>Rhodnius</taxon>
    </lineage>
</organism>
<feature type="peptide" id="PRO_0000365756" description="Tachykinin-related peptide 5" evidence="1">
    <location>
        <begin position="1"/>
        <end position="11"/>
    </location>
</feature>
<feature type="modified residue" description="Arginine amide" evidence="1">
    <location>
        <position position="11"/>
    </location>
</feature>
<name>TRP5_RHOPR</name>
<keyword id="KW-0027">Amidation</keyword>
<keyword id="KW-0903">Direct protein sequencing</keyword>
<keyword id="KW-0527">Neuropeptide</keyword>
<keyword id="KW-1185">Reference proteome</keyword>
<keyword id="KW-0964">Secreted</keyword>
<evidence type="ECO:0000269" key="1">
    <source>
    </source>
</evidence>
<evidence type="ECO:0000303" key="2">
    <source>
    </source>
</evidence>
<evidence type="ECO:0000305" key="3"/>